<reference key="1">
    <citation type="journal article" date="1995" name="J. Biol. Chem.">
        <title>The M(r) = 8,000 and 11,000 outer arm dynein light chains from Chlamydomonas flagella have cytoplasmic homologues.</title>
        <authorList>
            <person name="King S.M."/>
            <person name="Patel-King R.S."/>
        </authorList>
    </citation>
    <scope>NUCLEOTIDE SEQUENCE [MRNA]</scope>
    <scope>PROTEIN SEQUENCE OF 12-31; 34-45 AND 51-86</scope>
    <source>
        <strain>1132D</strain>
    </source>
</reference>
<dbReference type="EMBL" id="U19490">
    <property type="protein sequence ID" value="AAA80586.1"/>
    <property type="molecule type" value="mRNA"/>
</dbReference>
<dbReference type="PIR" id="A56444">
    <property type="entry name" value="A56444"/>
</dbReference>
<dbReference type="RefSeq" id="XP_001702907.1">
    <property type="nucleotide sequence ID" value="XM_001702855.2"/>
</dbReference>
<dbReference type="PDB" id="7JTK">
    <property type="method" value="EM"/>
    <property type="resolution" value="3.20 A"/>
    <property type="chains" value="a/b/c/d=1-91"/>
</dbReference>
<dbReference type="PDB" id="7JTS">
    <property type="method" value="EM"/>
    <property type="resolution" value="6.10 A"/>
    <property type="chains" value="a/b/c/d/e/f/g/h=1-91"/>
</dbReference>
<dbReference type="PDB" id="7JU4">
    <property type="method" value="EM"/>
    <property type="resolution" value="3.40 A"/>
    <property type="chains" value="a/b/c/d/e/f/g/h/o/p/q/r=1-91"/>
</dbReference>
<dbReference type="PDB" id="7KZM">
    <property type="method" value="EM"/>
    <property type="resolution" value="7.50 A"/>
    <property type="chains" value="K/L/M/N=1-91"/>
</dbReference>
<dbReference type="PDB" id="7KZN">
    <property type="method" value="EM"/>
    <property type="resolution" value="4.00 A"/>
    <property type="chains" value="K/L/M/N=1-91"/>
</dbReference>
<dbReference type="PDB" id="8GLV">
    <property type="method" value="EM"/>
    <property type="resolution" value="3.10 A"/>
    <property type="chains" value="AL/AM/AN/AO/AP/AQ/Be/Bp/Bq/Br/CB/CC/CD/CO/FA/FB/GZ/Ge/I6/Io/Ip/Iq/Ir/Is/It/Iu/KM/KN/KO/KP=1-91"/>
</dbReference>
<dbReference type="PDBsum" id="7JTK"/>
<dbReference type="PDBsum" id="7JTS"/>
<dbReference type="PDBsum" id="7JU4"/>
<dbReference type="PDBsum" id="7KZM"/>
<dbReference type="PDBsum" id="7KZN"/>
<dbReference type="PDBsum" id="8GLV"/>
<dbReference type="EMDB" id="EMD-22475"/>
<dbReference type="EMDB" id="EMD-22480"/>
<dbReference type="EMDB" id="EMD-22481"/>
<dbReference type="EMDB" id="EMD-23082"/>
<dbReference type="EMDB" id="EMD-23083"/>
<dbReference type="EMDB" id="EMD-40220"/>
<dbReference type="SMR" id="Q39580"/>
<dbReference type="PaxDb" id="3055-EDO96760"/>
<dbReference type="ProMEX" id="Q39580"/>
<dbReference type="EnsemblPlants" id="PNW85326">
    <property type="protein sequence ID" value="PNW85326"/>
    <property type="gene ID" value="CHLRE_03g181150v5"/>
</dbReference>
<dbReference type="GeneID" id="5728480"/>
<dbReference type="Gramene" id="PNW85326">
    <property type="protein sequence ID" value="PNW85326"/>
    <property type="gene ID" value="CHLRE_03g181150v5"/>
</dbReference>
<dbReference type="KEGG" id="cre:CHLRE_03g181150v5"/>
<dbReference type="eggNOG" id="KOG3430">
    <property type="taxonomic scope" value="Eukaryota"/>
</dbReference>
<dbReference type="HOGENOM" id="CLU_070944_4_0_1"/>
<dbReference type="OMA" id="THEKGHF"/>
<dbReference type="OrthoDB" id="10033309at2759"/>
<dbReference type="GO" id="GO:0005930">
    <property type="term" value="C:axoneme"/>
    <property type="evidence" value="ECO:0000314"/>
    <property type="project" value="BHF-UCL"/>
</dbReference>
<dbReference type="GO" id="GO:0097014">
    <property type="term" value="C:ciliary plasm"/>
    <property type="evidence" value="ECO:0000314"/>
    <property type="project" value="BHF-UCL"/>
</dbReference>
<dbReference type="GO" id="GO:0030286">
    <property type="term" value="C:dynein complex"/>
    <property type="evidence" value="ECO:0000314"/>
    <property type="project" value="BHF-UCL"/>
</dbReference>
<dbReference type="GO" id="GO:0005874">
    <property type="term" value="C:microtubule"/>
    <property type="evidence" value="ECO:0007669"/>
    <property type="project" value="UniProtKB-KW"/>
</dbReference>
<dbReference type="GO" id="GO:0031514">
    <property type="term" value="C:motile cilium"/>
    <property type="evidence" value="ECO:0007669"/>
    <property type="project" value="UniProtKB-KW"/>
</dbReference>
<dbReference type="GO" id="GO:0007017">
    <property type="term" value="P:microtubule-based process"/>
    <property type="evidence" value="ECO:0007669"/>
    <property type="project" value="InterPro"/>
</dbReference>
<dbReference type="GO" id="GO:0044458">
    <property type="term" value="P:motile cilium assembly"/>
    <property type="evidence" value="ECO:0000315"/>
    <property type="project" value="BHF-UCL"/>
</dbReference>
<dbReference type="CDD" id="cd21452">
    <property type="entry name" value="DLC-like_DYNLL1_DYNLL2"/>
    <property type="match status" value="1"/>
</dbReference>
<dbReference type="FunFam" id="3.30.740.10:FF:000001">
    <property type="entry name" value="Dynein light chain"/>
    <property type="match status" value="1"/>
</dbReference>
<dbReference type="Gene3D" id="3.30.740.10">
    <property type="entry name" value="Protein Inhibitor Of Neuronal Nitric Oxide Synthase"/>
    <property type="match status" value="1"/>
</dbReference>
<dbReference type="InterPro" id="IPR037177">
    <property type="entry name" value="DLC_sf"/>
</dbReference>
<dbReference type="InterPro" id="IPR019763">
    <property type="entry name" value="Dynein_light_1/2_CS"/>
</dbReference>
<dbReference type="InterPro" id="IPR001372">
    <property type="entry name" value="Dynein_light_chain_typ-1/2"/>
</dbReference>
<dbReference type="PANTHER" id="PTHR11886">
    <property type="entry name" value="DYNEIN LIGHT CHAIN"/>
    <property type="match status" value="1"/>
</dbReference>
<dbReference type="PANTHER" id="PTHR11886:SF35">
    <property type="entry name" value="DYNEIN LIGHT CHAIN"/>
    <property type="match status" value="1"/>
</dbReference>
<dbReference type="Pfam" id="PF01221">
    <property type="entry name" value="Dynein_light"/>
    <property type="match status" value="1"/>
</dbReference>
<dbReference type="SMART" id="SM01375">
    <property type="entry name" value="Dynein_light"/>
    <property type="match status" value="1"/>
</dbReference>
<dbReference type="SUPFAM" id="SSF54648">
    <property type="entry name" value="DLC"/>
    <property type="match status" value="1"/>
</dbReference>
<dbReference type="PROSITE" id="PS01239">
    <property type="entry name" value="DYNEIN_LIGHT_1"/>
    <property type="match status" value="1"/>
</dbReference>
<protein>
    <recommendedName>
        <fullName>Dynein 8 kDa light chain, flagellar outer arm</fullName>
    </recommendedName>
</protein>
<name>DYL1_CHLRE</name>
<comment type="subunit">
    <text>Consists of at least 3 heavy chains (alpha, beta and gamma), 2 intermediate chains and 8 light chains.</text>
</comment>
<comment type="subcellular location">
    <subcellularLocation>
        <location>Cytoplasm</location>
        <location>Cytoskeleton</location>
        <location>Flagellum axoneme</location>
    </subcellularLocation>
</comment>
<comment type="similarity">
    <text evidence="1">Belongs to the dynein light chain family.</text>
</comment>
<evidence type="ECO:0000305" key="1"/>
<evidence type="ECO:0007829" key="2">
    <source>
        <dbReference type="PDB" id="7JTK"/>
    </source>
</evidence>
<organism>
    <name type="scientific">Chlamydomonas reinhardtii</name>
    <name type="common">Chlamydomonas smithii</name>
    <dbReference type="NCBI Taxonomy" id="3055"/>
    <lineage>
        <taxon>Eukaryota</taxon>
        <taxon>Viridiplantae</taxon>
        <taxon>Chlorophyta</taxon>
        <taxon>core chlorophytes</taxon>
        <taxon>Chlorophyceae</taxon>
        <taxon>CS clade</taxon>
        <taxon>Chlamydomonadales</taxon>
        <taxon>Chlamydomonadaceae</taxon>
        <taxon>Chlamydomonas</taxon>
    </lineage>
</organism>
<keyword id="KW-0002">3D-structure</keyword>
<keyword id="KW-0966">Cell projection</keyword>
<keyword id="KW-0969">Cilium</keyword>
<keyword id="KW-0963">Cytoplasm</keyword>
<keyword id="KW-0206">Cytoskeleton</keyword>
<keyword id="KW-0903">Direct protein sequencing</keyword>
<keyword id="KW-0243">Dynein</keyword>
<keyword id="KW-0282">Flagellum</keyword>
<keyword id="KW-0493">Microtubule</keyword>
<keyword id="KW-0505">Motor protein</keyword>
<accession>Q39580</accession>
<feature type="chain" id="PRO_0000195141" description="Dynein 8 kDa light chain, flagellar outer arm">
    <location>
        <begin position="1"/>
        <end position="91"/>
    </location>
</feature>
<feature type="strand" evidence="2">
    <location>
        <begin position="8"/>
        <end position="13"/>
    </location>
</feature>
<feature type="helix" evidence="2">
    <location>
        <begin position="17"/>
        <end position="31"/>
    </location>
</feature>
<feature type="helix" evidence="2">
    <location>
        <begin position="37"/>
        <end position="51"/>
    </location>
</feature>
<feature type="strand" evidence="2">
    <location>
        <begin position="52"/>
        <end position="54"/>
    </location>
</feature>
<feature type="strand" evidence="2">
    <location>
        <begin position="57"/>
        <end position="70"/>
    </location>
</feature>
<feature type="strand" evidence="2">
    <location>
        <begin position="75"/>
        <end position="80"/>
    </location>
</feature>
<feature type="strand" evidence="2">
    <location>
        <begin position="83"/>
        <end position="88"/>
    </location>
</feature>
<proteinExistence type="evidence at protein level"/>
<sequence length="91" mass="10322">MASGSSKAVIKNADMSEEMQADAVDCATQALEKYNIEKDIAAYIKKEFDRKHNPTWHCIVGRNFGSYVTHETKHFIYFYLGQVAILLFKSG</sequence>